<protein>
    <recommendedName>
        <fullName evidence="13">Protein BEX3</fullName>
    </recommendedName>
    <alternativeName>
        <fullName evidence="1">Brain-expressed X-linked protein 3 homolog</fullName>
    </alternativeName>
    <alternativeName>
        <fullName>Nerve growth factor receptor-associated protein 1</fullName>
    </alternativeName>
    <alternativeName>
        <fullName evidence="10">p75NTR-associated cell death executor</fullName>
    </alternativeName>
</protein>
<comment type="function">
    <text evidence="3 9">May be a signaling adapter molecule involved in NGFR/p75NTR-mediated apoptosis induced by NGF (PubMed:10764727). Plays a role in zinc-triggered neuronal death (PubMed:10764727). In absence of reductive stress, acts as a pseudosubstrate for the CRL2(FEM1B) complex: associates with FEM1B via zinc, thereby preventing association between FEM1B and its substrates (PubMed:34562363).</text>
</comment>
<comment type="subunit">
    <text evidence="4 5 7">Self-associates (PubMed:11830582). Binds to the DEATH domain of p75NTR/NGFR (PubMed:11830582). Interacts with 14-3-3 epsilon (YWHAE) (PubMed:11278287). Interacts with DIABLO/SMAC (PubMed:15178455).</text>
</comment>
<comment type="subcellular location">
    <subcellularLocation>
        <location evidence="5">Nucleus</location>
    </subcellularLocation>
    <subcellularLocation>
        <location evidence="3 5">Cytoplasm</location>
        <location evidence="3 5">Cytosol</location>
    </subcellularLocation>
    <text evidence="5 8">Shuttles between the cytoplasm and the nucleus (PubMed:11830582). Associates with replicating mitochondria (PubMed:15563833).</text>
</comment>
<comment type="alternative products">
    <event type="alternative splicing"/>
    <isoform>
        <id>Q9WTZ9-1</id>
        <name>1</name>
        <sequence type="displayed"/>
    </isoform>
    <isoform>
        <id>Q9WTZ9-2</id>
        <name>2</name>
        <sequence type="described" ref="VSP_017744"/>
    </isoform>
</comment>
<comment type="tissue specificity">
    <text evidence="6 8">Widely expressed.</text>
</comment>
<comment type="domain">
    <text evidence="5">The nuclear export signal is required for export from the nucleus and the interactions with itself and NGFR/p75NTR.</text>
</comment>
<comment type="domain">
    <text evidence="9">The histidine cluster (His cluster) and Cys-121 mediate zinc-binding.</text>
</comment>
<comment type="PTM">
    <text evidence="3 13">Ubiquitinated (PubMed:10764727). Degraded by the proteasome (PubMed:10764727).</text>
</comment>
<comment type="similarity">
    <text evidence="13">Belongs to the BEX family.</text>
</comment>
<comment type="sequence caution" evidence="13">
    <conflict type="erroneous termination">
        <sequence resource="EMBL-CDS" id="BAB23350"/>
    </conflict>
    <text>Extended C-terminus.</text>
</comment>
<evidence type="ECO:0000250" key="1">
    <source>
        <dbReference type="UniProtKB" id="Q00994"/>
    </source>
</evidence>
<evidence type="ECO:0000256" key="2">
    <source>
        <dbReference type="SAM" id="MobiDB-lite"/>
    </source>
</evidence>
<evidence type="ECO:0000269" key="3">
    <source>
    </source>
</evidence>
<evidence type="ECO:0000269" key="4">
    <source>
    </source>
</evidence>
<evidence type="ECO:0000269" key="5">
    <source>
    </source>
</evidence>
<evidence type="ECO:0000269" key="6">
    <source>
    </source>
</evidence>
<evidence type="ECO:0000269" key="7">
    <source>
    </source>
</evidence>
<evidence type="ECO:0000269" key="8">
    <source>
    </source>
</evidence>
<evidence type="ECO:0000269" key="9">
    <source>
    </source>
</evidence>
<evidence type="ECO:0000303" key="10">
    <source>
    </source>
</evidence>
<evidence type="ECO:0000303" key="11">
    <source>
    </source>
</evidence>
<evidence type="ECO:0000303" key="12">
    <source>
    </source>
</evidence>
<evidence type="ECO:0000305" key="13"/>
<evidence type="ECO:0000312" key="14">
    <source>
        <dbReference type="MGI" id="MGI:1338016"/>
    </source>
</evidence>
<gene>
    <name evidence="12 14" type="primary">Bex3</name>
    <name evidence="10" type="synonym">Nade</name>
    <name type="synonym">Ngfrap1</name>
</gene>
<accession>Q9WTZ9</accession>
<accession>A3KGA0</accession>
<accession>A3KGA1</accession>
<accession>Q9CWN9</accession>
<accession>Q9D0S2</accession>
<accession>Q9D1N5</accession>
<organism>
    <name type="scientific">Mus musculus</name>
    <name type="common">Mouse</name>
    <dbReference type="NCBI Taxonomy" id="10090"/>
    <lineage>
        <taxon>Eukaryota</taxon>
        <taxon>Metazoa</taxon>
        <taxon>Chordata</taxon>
        <taxon>Craniata</taxon>
        <taxon>Vertebrata</taxon>
        <taxon>Euteleostomi</taxon>
        <taxon>Mammalia</taxon>
        <taxon>Eutheria</taxon>
        <taxon>Euarchontoglires</taxon>
        <taxon>Glires</taxon>
        <taxon>Rodentia</taxon>
        <taxon>Myomorpha</taxon>
        <taxon>Muroidea</taxon>
        <taxon>Muridae</taxon>
        <taxon>Murinae</taxon>
        <taxon>Mus</taxon>
        <taxon>Mus</taxon>
    </lineage>
</organism>
<name>BEX3_MOUSE</name>
<dbReference type="EMBL" id="AF097440">
    <property type="protein sequence ID" value="AAD24431.1"/>
    <property type="molecule type" value="mRNA"/>
</dbReference>
<dbReference type="EMBL" id="AF187066">
    <property type="protein sequence ID" value="AAF75131.1"/>
    <property type="molecule type" value="mRNA"/>
</dbReference>
<dbReference type="EMBL" id="AK003294">
    <property type="protein sequence ID" value="BAB22697.1"/>
    <property type="molecule type" value="mRNA"/>
</dbReference>
<dbReference type="EMBL" id="AK004531">
    <property type="protein sequence ID" value="BAB23350.1"/>
    <property type="status" value="ALT_SEQ"/>
    <property type="molecule type" value="mRNA"/>
</dbReference>
<dbReference type="EMBL" id="AK010500">
    <property type="protein sequence ID" value="BAB26986.1"/>
    <property type="molecule type" value="mRNA"/>
</dbReference>
<dbReference type="EMBL" id="AL671493">
    <property type="status" value="NOT_ANNOTATED_CDS"/>
    <property type="molecule type" value="Genomic_DNA"/>
</dbReference>
<dbReference type="EMBL" id="BC027815">
    <property type="protein sequence ID" value="AAH27815.1"/>
    <property type="molecule type" value="mRNA"/>
</dbReference>
<dbReference type="CCDS" id="CCDS30419.1">
    <molecule id="Q9WTZ9-1"/>
</dbReference>
<dbReference type="CCDS" id="CCDS53194.1">
    <molecule id="Q9WTZ9-2"/>
</dbReference>
<dbReference type="RefSeq" id="NP_001103703.1">
    <molecule id="Q9WTZ9-1"/>
    <property type="nucleotide sequence ID" value="NM_001110233.1"/>
</dbReference>
<dbReference type="RefSeq" id="NP_001103704.1">
    <molecule id="Q9WTZ9-2"/>
    <property type="nucleotide sequence ID" value="NM_001110234.1"/>
</dbReference>
<dbReference type="RefSeq" id="NP_033880.1">
    <molecule id="Q9WTZ9-1"/>
    <property type="nucleotide sequence ID" value="NM_009750.2"/>
</dbReference>
<dbReference type="BioGRID" id="198339">
    <property type="interactions" value="10"/>
</dbReference>
<dbReference type="FunCoup" id="Q9WTZ9">
    <property type="interactions" value="342"/>
</dbReference>
<dbReference type="STRING" id="10090.ENSMUSP00000136952"/>
<dbReference type="PhosphoSitePlus" id="Q9WTZ9"/>
<dbReference type="PaxDb" id="10090-ENSMUSP00000063039"/>
<dbReference type="Antibodypedia" id="540">
    <property type="antibodies" value="262 antibodies from 37 providers"/>
</dbReference>
<dbReference type="DNASU" id="12070"/>
<dbReference type="Ensembl" id="ENSMUST00000053540.11">
    <molecule id="Q9WTZ9-1"/>
    <property type="protein sequence ID" value="ENSMUSP00000063039.5"/>
    <property type="gene ID" value="ENSMUSG00000046432.13"/>
</dbReference>
<dbReference type="Ensembl" id="ENSMUST00000113112.2">
    <molecule id="Q9WTZ9-2"/>
    <property type="protein sequence ID" value="ENSMUSP00000108737.2"/>
    <property type="gene ID" value="ENSMUSG00000046432.13"/>
</dbReference>
<dbReference type="Ensembl" id="ENSMUST00000113113.2">
    <molecule id="Q9WTZ9-1"/>
    <property type="protein sequence ID" value="ENSMUSP00000108738.2"/>
    <property type="gene ID" value="ENSMUSG00000046432.13"/>
</dbReference>
<dbReference type="Ensembl" id="ENSMUST00000178632.8">
    <molecule id="Q9WTZ9-1"/>
    <property type="protein sequence ID" value="ENSMUSP00000136952.2"/>
    <property type="gene ID" value="ENSMUSG00000046432.13"/>
</dbReference>
<dbReference type="GeneID" id="12070"/>
<dbReference type="KEGG" id="mmu:12070"/>
<dbReference type="UCSC" id="uc009uik.2">
    <molecule id="Q9WTZ9-1"/>
    <property type="organism name" value="mouse"/>
</dbReference>
<dbReference type="AGR" id="MGI:1338016"/>
<dbReference type="CTD" id="27018"/>
<dbReference type="MGI" id="MGI:1338016">
    <property type="gene designation" value="Bex3"/>
</dbReference>
<dbReference type="VEuPathDB" id="HostDB:ENSMUSG00000046432"/>
<dbReference type="eggNOG" id="ENOG502TF4N">
    <property type="taxonomic scope" value="Eukaryota"/>
</dbReference>
<dbReference type="GeneTree" id="ENSGT00940000153412"/>
<dbReference type="HOGENOM" id="CLU_123122_0_0_1"/>
<dbReference type="InParanoid" id="Q9WTZ9"/>
<dbReference type="OMA" id="EMEQHMQ"/>
<dbReference type="OrthoDB" id="9833790at2759"/>
<dbReference type="PhylomeDB" id="Q9WTZ9"/>
<dbReference type="TreeFam" id="TF337909"/>
<dbReference type="Reactome" id="R-MMU-205025">
    <property type="pathway name" value="NADE modulates death signalling"/>
</dbReference>
<dbReference type="BioGRID-ORCS" id="12070">
    <property type="hits" value="2 hits in 76 CRISPR screens"/>
</dbReference>
<dbReference type="ChiTaRS" id="Ngfrap1">
    <property type="organism name" value="mouse"/>
</dbReference>
<dbReference type="PRO" id="PR:Q9WTZ9"/>
<dbReference type="Proteomes" id="UP000000589">
    <property type="component" value="Chromosome X"/>
</dbReference>
<dbReference type="RNAct" id="Q9WTZ9">
    <property type="molecule type" value="protein"/>
</dbReference>
<dbReference type="Bgee" id="ENSMUSG00000046432">
    <property type="expression patterns" value="Expressed in yolk sac and 248 other cell types or tissues"/>
</dbReference>
<dbReference type="GO" id="GO:0005737">
    <property type="term" value="C:cytoplasm"/>
    <property type="evidence" value="ECO:0000266"/>
    <property type="project" value="MGI"/>
</dbReference>
<dbReference type="GO" id="GO:0005829">
    <property type="term" value="C:cytosol"/>
    <property type="evidence" value="ECO:0000314"/>
    <property type="project" value="MGI"/>
</dbReference>
<dbReference type="GO" id="GO:0005634">
    <property type="term" value="C:nucleus"/>
    <property type="evidence" value="ECO:0007669"/>
    <property type="project" value="UniProtKB-SubCell"/>
</dbReference>
<dbReference type="GO" id="GO:0005123">
    <property type="term" value="F:death receptor binding"/>
    <property type="evidence" value="ECO:0000353"/>
    <property type="project" value="MGI"/>
</dbReference>
<dbReference type="GO" id="GO:0042802">
    <property type="term" value="F:identical protein binding"/>
    <property type="evidence" value="ECO:0007669"/>
    <property type="project" value="Ensembl"/>
</dbReference>
<dbReference type="GO" id="GO:0046872">
    <property type="term" value="F:metal ion binding"/>
    <property type="evidence" value="ECO:0007669"/>
    <property type="project" value="UniProtKB-KW"/>
</dbReference>
<dbReference type="GO" id="GO:0140678">
    <property type="term" value="F:molecular function inhibitor activity"/>
    <property type="evidence" value="ECO:0000314"/>
    <property type="project" value="UniProtKB"/>
</dbReference>
<dbReference type="GO" id="GO:0005163">
    <property type="term" value="F:nerve growth factor receptor binding"/>
    <property type="evidence" value="ECO:0007669"/>
    <property type="project" value="Ensembl"/>
</dbReference>
<dbReference type="GO" id="GO:0008625">
    <property type="term" value="P:extrinsic apoptotic signaling pathway via death domain receptors"/>
    <property type="evidence" value="ECO:0000353"/>
    <property type="project" value="MGI"/>
</dbReference>
<dbReference type="GO" id="GO:0031397">
    <property type="term" value="P:negative regulation of protein ubiquitination"/>
    <property type="evidence" value="ECO:0000314"/>
    <property type="project" value="UniProtKB"/>
</dbReference>
<dbReference type="InterPro" id="IPR007623">
    <property type="entry name" value="BEX"/>
</dbReference>
<dbReference type="InterPro" id="IPR021156">
    <property type="entry name" value="TF_A-like/BEX"/>
</dbReference>
<dbReference type="PANTHER" id="PTHR19430">
    <property type="entry name" value="PROTEIN BEX1-RELATED"/>
    <property type="match status" value="1"/>
</dbReference>
<dbReference type="PANTHER" id="PTHR19430:SF1">
    <property type="entry name" value="PROTEIN BEX3"/>
    <property type="match status" value="1"/>
</dbReference>
<dbReference type="Pfam" id="PF04538">
    <property type="entry name" value="BEX"/>
    <property type="match status" value="1"/>
</dbReference>
<dbReference type="PIRSF" id="PIRSF008633">
    <property type="entry name" value="BEX"/>
    <property type="match status" value="1"/>
</dbReference>
<reference key="1">
    <citation type="journal article" date="1999" name="Hum. Mol. Genet.">
        <title>Bex1, a gene with increased expression in parthenogenetic embryos, is a member of a novel gene family on the mouse X chromosome.</title>
        <authorList>
            <person name="Brown A.L."/>
            <person name="Kay G.F."/>
        </authorList>
    </citation>
    <scope>NUCLEOTIDE SEQUENCE [MRNA] (ISOFORM 1)</scope>
    <source>
        <strain>FVB/N</strain>
    </source>
</reference>
<reference key="2">
    <citation type="journal article" date="1999" name="Hum. Mol. Genet.">
        <authorList>
            <person name="Brown A.L."/>
            <person name="Kay G.F."/>
        </authorList>
    </citation>
    <scope>ERRATUM OF PUBMED:10072429</scope>
</reference>
<reference key="3">
    <citation type="journal article" date="2000" name="J. Biol. Chem.">
        <title>NADE, a p75NTR-associated cell death executor, is involved in signal transduction mediated by the common neurotrophin receptor p75NTR.</title>
        <authorList>
            <person name="Mukai J."/>
            <person name="Hachiya T."/>
            <person name="Shoji-Hoshino S."/>
            <person name="Kimura M.T."/>
            <person name="Nadano D."/>
            <person name="Suvanto P."/>
            <person name="Hanaoka T."/>
            <person name="Li Y."/>
            <person name="Irie S."/>
            <person name="Greene L.A."/>
            <person name="Sato T.-A."/>
        </authorList>
    </citation>
    <scope>NUCLEOTIDE SEQUENCE [MRNA] (ISOFORM 1)</scope>
    <scope>FUNCTION</scope>
    <scope>SUBCELLULAR LOCATION</scope>
    <scope>DEGRADATION BY THE PROTEASOME</scope>
    <source>
        <strain>BALB/cJ</strain>
    </source>
</reference>
<reference key="4">
    <citation type="journal article" date="2005" name="Science">
        <title>The transcriptional landscape of the mammalian genome.</title>
        <authorList>
            <person name="Carninci P."/>
            <person name="Kasukawa T."/>
            <person name="Katayama S."/>
            <person name="Gough J."/>
            <person name="Frith M.C."/>
            <person name="Maeda N."/>
            <person name="Oyama R."/>
            <person name="Ravasi T."/>
            <person name="Lenhard B."/>
            <person name="Wells C."/>
            <person name="Kodzius R."/>
            <person name="Shimokawa K."/>
            <person name="Bajic V.B."/>
            <person name="Brenner S.E."/>
            <person name="Batalov S."/>
            <person name="Forrest A.R."/>
            <person name="Zavolan M."/>
            <person name="Davis M.J."/>
            <person name="Wilming L.G."/>
            <person name="Aidinis V."/>
            <person name="Allen J.E."/>
            <person name="Ambesi-Impiombato A."/>
            <person name="Apweiler R."/>
            <person name="Aturaliya R.N."/>
            <person name="Bailey T.L."/>
            <person name="Bansal M."/>
            <person name="Baxter L."/>
            <person name="Beisel K.W."/>
            <person name="Bersano T."/>
            <person name="Bono H."/>
            <person name="Chalk A.M."/>
            <person name="Chiu K.P."/>
            <person name="Choudhary V."/>
            <person name="Christoffels A."/>
            <person name="Clutterbuck D.R."/>
            <person name="Crowe M.L."/>
            <person name="Dalla E."/>
            <person name="Dalrymple B.P."/>
            <person name="de Bono B."/>
            <person name="Della Gatta G."/>
            <person name="di Bernardo D."/>
            <person name="Down T."/>
            <person name="Engstrom P."/>
            <person name="Fagiolini M."/>
            <person name="Faulkner G."/>
            <person name="Fletcher C.F."/>
            <person name="Fukushima T."/>
            <person name="Furuno M."/>
            <person name="Futaki S."/>
            <person name="Gariboldi M."/>
            <person name="Georgii-Hemming P."/>
            <person name="Gingeras T.R."/>
            <person name="Gojobori T."/>
            <person name="Green R.E."/>
            <person name="Gustincich S."/>
            <person name="Harbers M."/>
            <person name="Hayashi Y."/>
            <person name="Hensch T.K."/>
            <person name="Hirokawa N."/>
            <person name="Hill D."/>
            <person name="Huminiecki L."/>
            <person name="Iacono M."/>
            <person name="Ikeo K."/>
            <person name="Iwama A."/>
            <person name="Ishikawa T."/>
            <person name="Jakt M."/>
            <person name="Kanapin A."/>
            <person name="Katoh M."/>
            <person name="Kawasawa Y."/>
            <person name="Kelso J."/>
            <person name="Kitamura H."/>
            <person name="Kitano H."/>
            <person name="Kollias G."/>
            <person name="Krishnan S.P."/>
            <person name="Kruger A."/>
            <person name="Kummerfeld S.K."/>
            <person name="Kurochkin I.V."/>
            <person name="Lareau L.F."/>
            <person name="Lazarevic D."/>
            <person name="Lipovich L."/>
            <person name="Liu J."/>
            <person name="Liuni S."/>
            <person name="McWilliam S."/>
            <person name="Madan Babu M."/>
            <person name="Madera M."/>
            <person name="Marchionni L."/>
            <person name="Matsuda H."/>
            <person name="Matsuzawa S."/>
            <person name="Miki H."/>
            <person name="Mignone F."/>
            <person name="Miyake S."/>
            <person name="Morris K."/>
            <person name="Mottagui-Tabar S."/>
            <person name="Mulder N."/>
            <person name="Nakano N."/>
            <person name="Nakauchi H."/>
            <person name="Ng P."/>
            <person name="Nilsson R."/>
            <person name="Nishiguchi S."/>
            <person name="Nishikawa S."/>
            <person name="Nori F."/>
            <person name="Ohara O."/>
            <person name="Okazaki Y."/>
            <person name="Orlando V."/>
            <person name="Pang K.C."/>
            <person name="Pavan W.J."/>
            <person name="Pavesi G."/>
            <person name="Pesole G."/>
            <person name="Petrovsky N."/>
            <person name="Piazza S."/>
            <person name="Reed J."/>
            <person name="Reid J.F."/>
            <person name="Ring B.Z."/>
            <person name="Ringwald M."/>
            <person name="Rost B."/>
            <person name="Ruan Y."/>
            <person name="Salzberg S.L."/>
            <person name="Sandelin A."/>
            <person name="Schneider C."/>
            <person name="Schoenbach C."/>
            <person name="Sekiguchi K."/>
            <person name="Semple C.A."/>
            <person name="Seno S."/>
            <person name="Sessa L."/>
            <person name="Sheng Y."/>
            <person name="Shibata Y."/>
            <person name="Shimada H."/>
            <person name="Shimada K."/>
            <person name="Silva D."/>
            <person name="Sinclair B."/>
            <person name="Sperling S."/>
            <person name="Stupka E."/>
            <person name="Sugiura K."/>
            <person name="Sultana R."/>
            <person name="Takenaka Y."/>
            <person name="Taki K."/>
            <person name="Tammoja K."/>
            <person name="Tan S.L."/>
            <person name="Tang S."/>
            <person name="Taylor M.S."/>
            <person name="Tegner J."/>
            <person name="Teichmann S.A."/>
            <person name="Ueda H.R."/>
            <person name="van Nimwegen E."/>
            <person name="Verardo R."/>
            <person name="Wei C.L."/>
            <person name="Yagi K."/>
            <person name="Yamanishi H."/>
            <person name="Zabarovsky E."/>
            <person name="Zhu S."/>
            <person name="Zimmer A."/>
            <person name="Hide W."/>
            <person name="Bult C."/>
            <person name="Grimmond S.M."/>
            <person name="Teasdale R.D."/>
            <person name="Liu E.T."/>
            <person name="Brusic V."/>
            <person name="Quackenbush J."/>
            <person name="Wahlestedt C."/>
            <person name="Mattick J.S."/>
            <person name="Hume D.A."/>
            <person name="Kai C."/>
            <person name="Sasaki D."/>
            <person name="Tomaru Y."/>
            <person name="Fukuda S."/>
            <person name="Kanamori-Katayama M."/>
            <person name="Suzuki M."/>
            <person name="Aoki J."/>
            <person name="Arakawa T."/>
            <person name="Iida J."/>
            <person name="Imamura K."/>
            <person name="Itoh M."/>
            <person name="Kato T."/>
            <person name="Kawaji H."/>
            <person name="Kawagashira N."/>
            <person name="Kawashima T."/>
            <person name="Kojima M."/>
            <person name="Kondo S."/>
            <person name="Konno H."/>
            <person name="Nakano K."/>
            <person name="Ninomiya N."/>
            <person name="Nishio T."/>
            <person name="Okada M."/>
            <person name="Plessy C."/>
            <person name="Shibata K."/>
            <person name="Shiraki T."/>
            <person name="Suzuki S."/>
            <person name="Tagami M."/>
            <person name="Waki K."/>
            <person name="Watahiki A."/>
            <person name="Okamura-Oho Y."/>
            <person name="Suzuki H."/>
            <person name="Kawai J."/>
            <person name="Hayashizaki Y."/>
        </authorList>
    </citation>
    <scope>NUCLEOTIDE SEQUENCE [LARGE SCALE MRNA] (ISOFORMS 1 AND 2)</scope>
    <source>
        <strain>C57BL/6J</strain>
    </source>
</reference>
<reference key="5">
    <citation type="journal article" date="2009" name="PLoS Biol.">
        <title>Lineage-specific biology revealed by a finished genome assembly of the mouse.</title>
        <authorList>
            <person name="Church D.M."/>
            <person name="Goodstadt L."/>
            <person name="Hillier L.W."/>
            <person name="Zody M.C."/>
            <person name="Goldstein S."/>
            <person name="She X."/>
            <person name="Bult C.J."/>
            <person name="Agarwala R."/>
            <person name="Cherry J.L."/>
            <person name="DiCuccio M."/>
            <person name="Hlavina W."/>
            <person name="Kapustin Y."/>
            <person name="Meric P."/>
            <person name="Maglott D."/>
            <person name="Birtle Z."/>
            <person name="Marques A.C."/>
            <person name="Graves T."/>
            <person name="Zhou S."/>
            <person name="Teague B."/>
            <person name="Potamousis K."/>
            <person name="Churas C."/>
            <person name="Place M."/>
            <person name="Herschleb J."/>
            <person name="Runnheim R."/>
            <person name="Forrest D."/>
            <person name="Amos-Landgraf J."/>
            <person name="Schwartz D.C."/>
            <person name="Cheng Z."/>
            <person name="Lindblad-Toh K."/>
            <person name="Eichler E.E."/>
            <person name="Ponting C.P."/>
        </authorList>
    </citation>
    <scope>NUCLEOTIDE SEQUENCE [LARGE SCALE GENOMIC DNA]</scope>
    <source>
        <strain>C57BL/6J</strain>
    </source>
</reference>
<reference key="6">
    <citation type="journal article" date="2004" name="Genome Res.">
        <title>The status, quality, and expansion of the NIH full-length cDNA project: the Mammalian Gene Collection (MGC).</title>
        <authorList>
            <consortium name="The MGC Project Team"/>
        </authorList>
    </citation>
    <scope>NUCLEOTIDE SEQUENCE [LARGE SCALE MRNA] (ISOFORM 1)</scope>
    <source>
        <strain>FVB/N</strain>
        <tissue>Mammary tumor</tissue>
    </source>
</reference>
<reference key="7">
    <citation type="journal article" date="2001" name="J. Biol. Chem.">
        <title>14-3-3 is involved in p75 neurotrophin receptor-mediated signal transduction.</title>
        <authorList>
            <person name="Kimura M.T."/>
            <person name="Irie S."/>
            <person name="Shoji-Hoshino S."/>
            <person name="Mukai J."/>
            <person name="Nadano D."/>
            <person name="Oshimura M."/>
            <person name="Sato T.-A."/>
        </authorList>
    </citation>
    <scope>INTERACTION WITH YWHAE</scope>
</reference>
<reference key="8">
    <citation type="journal article" date="2002" name="J. Biol. Chem.">
        <title>Structure-function analysis of NADE: identification of regions that mediate nerve growth factor-induced apoptosis.</title>
        <authorList>
            <person name="Mukai J."/>
            <person name="Shoji S."/>
            <person name="Kimura M.T."/>
            <person name="Okubo S."/>
            <person name="Sano H."/>
            <person name="Suvanto P."/>
            <person name="Li Y."/>
            <person name="Irie S."/>
            <person name="Sato T.-A."/>
        </authorList>
    </citation>
    <scope>SUBCELLULAR LOCATION</scope>
    <scope>SUBUNIT</scope>
    <scope>INTERACTION WITH NGFR</scope>
    <scope>MUTAGENESIS OF LEU-94; LEU-97 AND LEU-99</scope>
</reference>
<reference key="9">
    <citation type="journal article" date="2003" name="Brain Res. Dev. Brain Res.">
        <title>Characterization of NADE, NRIF and SC-1 gene expression during mouse neurogenesis.</title>
        <authorList>
            <person name="Kendall S.E."/>
            <person name="Ryczko M.C."/>
            <person name="Mehan M."/>
            <person name="Verdi J.M."/>
        </authorList>
    </citation>
    <scope>TISSUE SPECIFICITY</scope>
</reference>
<reference key="10">
    <citation type="journal article" date="2004" name="Biochem. Biophys. Res. Commun.">
        <title>Direct interaction of Smac with NADE promotes TRAIL-induced apoptosis.</title>
        <authorList>
            <person name="Yoon K."/>
            <person name="Jang H.D."/>
            <person name="Lee S.Y."/>
        </authorList>
    </citation>
    <scope>INTERACTION WITH DIABLO</scope>
</reference>
<reference key="11">
    <citation type="journal article" date="2004" name="Gene">
        <title>Bex3 associates with replicating mitochondria and is involved in possible growth control of F9 teratocarcinoma cells.</title>
        <authorList>
            <person name="Kim A.-J."/>
            <person name="Lee C.-S."/>
            <person name="Schlessinger D."/>
        </authorList>
    </citation>
    <scope>SUBCELLULAR LOCATION</scope>
    <scope>TISSUE SPECIFICITY</scope>
    <scope>MUTAGENESIS OF CYS-121</scope>
</reference>
<reference key="12">
    <citation type="journal article" date="2021" name="Cell">
        <title>Structural basis and regulation of the reductive stress response.</title>
        <authorList>
            <person name="Manford A.G."/>
            <person name="Mena E.L."/>
            <person name="Shih K.Y."/>
            <person name="Gee C.L."/>
            <person name="McMinimy R."/>
            <person name="Martinez-Gonzalez B."/>
            <person name="Sherriff R."/>
            <person name="Lew B."/>
            <person name="Zoltek M."/>
            <person name="Rodriguez-Perez F."/>
            <person name="Woldesenbet M."/>
            <person name="Kuriyan J."/>
            <person name="Rape M."/>
        </authorList>
    </citation>
    <scope>FUNCTION</scope>
    <scope>ZINC-BINDING</scope>
    <scope>MUTAGENESIS OF 113-HIS--HIS-117 AND CYS-121</scope>
</reference>
<proteinExistence type="evidence at protein level"/>
<feature type="chain" id="PRO_0000229781" description="Protein BEX3">
    <location>
        <begin position="1"/>
        <end position="124"/>
    </location>
</feature>
<feature type="region of interest" description="Disordered" evidence="2">
    <location>
        <begin position="1"/>
        <end position="56"/>
    </location>
</feature>
<feature type="region of interest" description="Interaction with 14-3-3 epsilon" evidence="4">
    <location>
        <begin position="81"/>
        <end position="124"/>
    </location>
</feature>
<feature type="region of interest" description="Interaction with p75NTR/NGFR" evidence="5">
    <location>
        <begin position="81"/>
        <end position="106"/>
    </location>
</feature>
<feature type="region of interest" description="His cluster" evidence="9">
    <location>
        <begin position="113"/>
        <end position="117"/>
    </location>
</feature>
<feature type="short sequence motif" description="Nuclear export signal" evidence="5">
    <location>
        <begin position="90"/>
        <end position="100"/>
    </location>
</feature>
<feature type="compositionally biased region" description="Basic residues" evidence="2">
    <location>
        <begin position="42"/>
        <end position="53"/>
    </location>
</feature>
<feature type="binding site" evidence="9">
    <location>
        <position position="121"/>
    </location>
    <ligand>
        <name>Zn(2+)</name>
        <dbReference type="ChEBI" id="CHEBI:29105"/>
        <note>ligand shared with FEM1B</note>
    </ligand>
</feature>
<feature type="splice variant" id="VSP_017744" description="In isoform 2." evidence="11">
    <location>
        <begin position="1"/>
        <end position="10"/>
    </location>
</feature>
<feature type="mutagenesis site" description="Abolishes nuclear export and interactions with itself and p75NTR/NGFR; when associated with A-97 and A-99." evidence="5">
    <original>L</original>
    <variation>A</variation>
    <location>
        <position position="94"/>
    </location>
</feature>
<feature type="mutagenesis site" description="Abolishes nuclear export and interactions with itself and p75NTR/NGFR; when associated with A-97 and A-99." evidence="5">
    <original>L</original>
    <variation>A</variation>
    <location>
        <position position="97"/>
    </location>
</feature>
<feature type="mutagenesis site" description="Abolishes nuclear export and interactions with itself and p75NTR/NGFR; when associated with A-94 and A-97." evidence="5">
    <original>L</original>
    <variation>A</variation>
    <location>
        <position position="99"/>
    </location>
</feature>
<feature type="mutagenesis site" description="Abolished zinc-binding and association with FEM1B." evidence="9">
    <original>HHDHH</original>
    <variation>AADAA</variation>
    <location>
        <begin position="113"/>
        <end position="117"/>
    </location>
</feature>
<feature type="mutagenesis site" description="Abolishes localization with replicating mitochondria." evidence="8">
    <original>C</original>
    <variation>A</variation>
    <location>
        <position position="121"/>
    </location>
</feature>
<feature type="mutagenesis site" description="Abolished zinc-binding and association with FEM1B." evidence="9">
    <original>C</original>
    <variation>S</variation>
    <location>
        <position position="121"/>
    </location>
</feature>
<feature type="sequence conflict" description="In Ref. 4; BAB26986." evidence="13" ref="4">
    <original>N</original>
    <variation>D</variation>
    <location>
        <position position="17"/>
    </location>
</feature>
<feature type="sequence conflict" description="In Ref. 4; BAB22697." evidence="13" ref="4">
    <original>M</original>
    <variation>I</variation>
    <location>
        <position position="82"/>
    </location>
</feature>
<keyword id="KW-0025">Alternative splicing</keyword>
<keyword id="KW-0053">Apoptosis</keyword>
<keyword id="KW-0963">Cytoplasm</keyword>
<keyword id="KW-0479">Metal-binding</keyword>
<keyword id="KW-0539">Nucleus</keyword>
<keyword id="KW-1185">Reference proteome</keyword>
<keyword id="KW-0832">Ubl conjugation</keyword>
<keyword id="KW-0862">Zinc</keyword>
<sequence>MANVHQENEEMEQPLQNGQEDRPVGGGEGHQPAANNNNNNHNHNHNHHRRGQARRLAPNFRWAIPNRQMNDGLGGDGDDMEMFMEEMREIRRKLRELQLRNCLRILMGELSNHHDHHDEFCLMP</sequence>